<proteinExistence type="inferred from homology"/>
<sequence>MKNINPTQTAAWQALQKHFDEMKDVTIADLFAKDGDRFSKFSATFDDQMLVDYSKNRITEETLAKLQDLAKECDLAGAIKSMFSGEKINRTENRAVLHVALRNRSNTPILVDGKDVMPEVNAVLEKMKTFSEAIISGEWKGYTGKAITDVVNIGIGGSDLGPYMVTEALRPYKNHLNMHFVSNVDGTHISEVLKKVNPETTLFLVASKTFTTQETMTNAHSARDWFLKAAGDEKHVAKHFAALSTNAKAVGEFGIDTANMFEFWDWVGGRYSLWSAIGLSIVLSIGFDNFVELLSGAHAMDKHFSTTPAEKNLPVLLALIGIWYNNFFGAETEAILPYDQYMHRFAAYFQQGNMESNGKYVDRNGNVVDYQTGPIIWGEPGTNGQHAFYQLIHQGTKMVPCDFIAPAITHNPLSDHHQKLLSNFFAQTEALAFGKSREVVEQEYRDQGKDPATLDYVVPFKVFEGNRPTNSILLREITPFSLGALIALYEHKIFTQGVILNIFTFDQWGVELGKQLANRILPELKDDKEISSHDSSTNGLINRYKAWRG</sequence>
<gene>
    <name evidence="1" type="primary">pgi</name>
    <name type="ordered locus">SF4180</name>
    <name type="ordered locus">S3551</name>
</gene>
<evidence type="ECO:0000255" key="1">
    <source>
        <dbReference type="HAMAP-Rule" id="MF_00473"/>
    </source>
</evidence>
<accession>Q83IN9</accession>
<accession>Q7UBD1</accession>
<comment type="function">
    <text evidence="1">Catalyzes the reversible isomerization of glucose-6-phosphate to fructose-6-phosphate.</text>
</comment>
<comment type="catalytic activity">
    <reaction evidence="1">
        <text>alpha-D-glucose 6-phosphate = beta-D-fructose 6-phosphate</text>
        <dbReference type="Rhea" id="RHEA:11816"/>
        <dbReference type="ChEBI" id="CHEBI:57634"/>
        <dbReference type="ChEBI" id="CHEBI:58225"/>
        <dbReference type="EC" id="5.3.1.9"/>
    </reaction>
</comment>
<comment type="pathway">
    <text evidence="1">Carbohydrate biosynthesis; gluconeogenesis.</text>
</comment>
<comment type="pathway">
    <text evidence="1">Carbohydrate degradation; glycolysis; D-glyceraldehyde 3-phosphate and glycerone phosphate from D-glucose: step 2/4.</text>
</comment>
<comment type="subcellular location">
    <subcellularLocation>
        <location evidence="1">Cytoplasm</location>
    </subcellularLocation>
</comment>
<comment type="similarity">
    <text evidence="1">Belongs to the GPI family.</text>
</comment>
<protein>
    <recommendedName>
        <fullName evidence="1">Glucose-6-phosphate isomerase</fullName>
        <shortName evidence="1">GPI</shortName>
        <ecNumber evidence="1">5.3.1.9</ecNumber>
    </recommendedName>
    <alternativeName>
        <fullName evidence="1">Phosphoglucose isomerase</fullName>
        <shortName evidence="1">PGI</shortName>
    </alternativeName>
    <alternativeName>
        <fullName evidence="1">Phosphohexose isomerase</fullName>
        <shortName evidence="1">PHI</shortName>
    </alternativeName>
</protein>
<name>G6PI_SHIFL</name>
<reference key="1">
    <citation type="journal article" date="2002" name="Nucleic Acids Res.">
        <title>Genome sequence of Shigella flexneri 2a: insights into pathogenicity through comparison with genomes of Escherichia coli K12 and O157.</title>
        <authorList>
            <person name="Jin Q."/>
            <person name="Yuan Z."/>
            <person name="Xu J."/>
            <person name="Wang Y."/>
            <person name="Shen Y."/>
            <person name="Lu W."/>
            <person name="Wang J."/>
            <person name="Liu H."/>
            <person name="Yang J."/>
            <person name="Yang F."/>
            <person name="Zhang X."/>
            <person name="Zhang J."/>
            <person name="Yang G."/>
            <person name="Wu H."/>
            <person name="Qu D."/>
            <person name="Dong J."/>
            <person name="Sun L."/>
            <person name="Xue Y."/>
            <person name="Zhao A."/>
            <person name="Gao Y."/>
            <person name="Zhu J."/>
            <person name="Kan B."/>
            <person name="Ding K."/>
            <person name="Chen S."/>
            <person name="Cheng H."/>
            <person name="Yao Z."/>
            <person name="He B."/>
            <person name="Chen R."/>
            <person name="Ma D."/>
            <person name="Qiang B."/>
            <person name="Wen Y."/>
            <person name="Hou Y."/>
            <person name="Yu J."/>
        </authorList>
    </citation>
    <scope>NUCLEOTIDE SEQUENCE [LARGE SCALE GENOMIC DNA]</scope>
    <source>
        <strain>301 / Serotype 2a</strain>
    </source>
</reference>
<reference key="2">
    <citation type="journal article" date="2003" name="Infect. Immun.">
        <title>Complete genome sequence and comparative genomics of Shigella flexneri serotype 2a strain 2457T.</title>
        <authorList>
            <person name="Wei J."/>
            <person name="Goldberg M.B."/>
            <person name="Burland V."/>
            <person name="Venkatesan M.M."/>
            <person name="Deng W."/>
            <person name="Fournier G."/>
            <person name="Mayhew G.F."/>
            <person name="Plunkett G. III"/>
            <person name="Rose D.J."/>
            <person name="Darling A."/>
            <person name="Mau B."/>
            <person name="Perna N.T."/>
            <person name="Payne S.M."/>
            <person name="Runyen-Janecky L.J."/>
            <person name="Zhou S."/>
            <person name="Schwartz D.C."/>
            <person name="Blattner F.R."/>
        </authorList>
    </citation>
    <scope>NUCLEOTIDE SEQUENCE [LARGE SCALE GENOMIC DNA]</scope>
    <source>
        <strain>ATCC 700930 / 2457T / Serotype 2a</strain>
    </source>
</reference>
<keyword id="KW-0007">Acetylation</keyword>
<keyword id="KW-0963">Cytoplasm</keyword>
<keyword id="KW-0312">Gluconeogenesis</keyword>
<keyword id="KW-0324">Glycolysis</keyword>
<keyword id="KW-0413">Isomerase</keyword>
<keyword id="KW-1185">Reference proteome</keyword>
<dbReference type="EC" id="5.3.1.9" evidence="1"/>
<dbReference type="EMBL" id="AE005674">
    <property type="protein sequence ID" value="AAN45601.2"/>
    <property type="molecule type" value="Genomic_DNA"/>
</dbReference>
<dbReference type="EMBL" id="AE014073">
    <property type="protein sequence ID" value="AAP18598.1"/>
    <property type="molecule type" value="Genomic_DNA"/>
</dbReference>
<dbReference type="RefSeq" id="NP_709894.2">
    <property type="nucleotide sequence ID" value="NC_004337.2"/>
</dbReference>
<dbReference type="RefSeq" id="WP_000789994.1">
    <property type="nucleotide sequence ID" value="NZ_WPGW01000079.1"/>
</dbReference>
<dbReference type="SMR" id="Q83IN9"/>
<dbReference type="STRING" id="198214.SF4180"/>
<dbReference type="PaxDb" id="198214-SF4180"/>
<dbReference type="GeneID" id="1025433"/>
<dbReference type="KEGG" id="sfl:SF4180"/>
<dbReference type="KEGG" id="sfx:S3551"/>
<dbReference type="PATRIC" id="fig|198214.7.peg.4932"/>
<dbReference type="HOGENOM" id="CLU_017947_3_1_6"/>
<dbReference type="UniPathway" id="UPA00109">
    <property type="reaction ID" value="UER00181"/>
</dbReference>
<dbReference type="UniPathway" id="UPA00138"/>
<dbReference type="Proteomes" id="UP000001006">
    <property type="component" value="Chromosome"/>
</dbReference>
<dbReference type="Proteomes" id="UP000002673">
    <property type="component" value="Chromosome"/>
</dbReference>
<dbReference type="GO" id="GO:0005829">
    <property type="term" value="C:cytosol"/>
    <property type="evidence" value="ECO:0007669"/>
    <property type="project" value="TreeGrafter"/>
</dbReference>
<dbReference type="GO" id="GO:0097367">
    <property type="term" value="F:carbohydrate derivative binding"/>
    <property type="evidence" value="ECO:0007669"/>
    <property type="project" value="InterPro"/>
</dbReference>
<dbReference type="GO" id="GO:0004347">
    <property type="term" value="F:glucose-6-phosphate isomerase activity"/>
    <property type="evidence" value="ECO:0007669"/>
    <property type="project" value="UniProtKB-UniRule"/>
</dbReference>
<dbReference type="GO" id="GO:0048029">
    <property type="term" value="F:monosaccharide binding"/>
    <property type="evidence" value="ECO:0007669"/>
    <property type="project" value="TreeGrafter"/>
</dbReference>
<dbReference type="GO" id="GO:0006094">
    <property type="term" value="P:gluconeogenesis"/>
    <property type="evidence" value="ECO:0007669"/>
    <property type="project" value="UniProtKB-UniRule"/>
</dbReference>
<dbReference type="GO" id="GO:0051156">
    <property type="term" value="P:glucose 6-phosphate metabolic process"/>
    <property type="evidence" value="ECO:0007669"/>
    <property type="project" value="TreeGrafter"/>
</dbReference>
<dbReference type="GO" id="GO:0006096">
    <property type="term" value="P:glycolytic process"/>
    <property type="evidence" value="ECO:0007669"/>
    <property type="project" value="UniProtKB-UniRule"/>
</dbReference>
<dbReference type="CDD" id="cd05015">
    <property type="entry name" value="SIS_PGI_1"/>
    <property type="match status" value="1"/>
</dbReference>
<dbReference type="CDD" id="cd05016">
    <property type="entry name" value="SIS_PGI_2"/>
    <property type="match status" value="1"/>
</dbReference>
<dbReference type="FunFam" id="1.10.1390.10:FF:000001">
    <property type="entry name" value="Glucose-6-phosphate isomerase"/>
    <property type="match status" value="1"/>
</dbReference>
<dbReference type="FunFam" id="3.40.50.10490:FF:000004">
    <property type="entry name" value="Glucose-6-phosphate isomerase"/>
    <property type="match status" value="1"/>
</dbReference>
<dbReference type="Gene3D" id="1.10.1390.10">
    <property type="match status" value="1"/>
</dbReference>
<dbReference type="Gene3D" id="3.40.50.10490">
    <property type="entry name" value="Glucose-6-phosphate isomerase like protein, domain 1"/>
    <property type="match status" value="2"/>
</dbReference>
<dbReference type="HAMAP" id="MF_00473">
    <property type="entry name" value="G6P_isomerase"/>
    <property type="match status" value="1"/>
</dbReference>
<dbReference type="InterPro" id="IPR001672">
    <property type="entry name" value="G6P_Isomerase"/>
</dbReference>
<dbReference type="InterPro" id="IPR023096">
    <property type="entry name" value="G6P_Isomerase_C"/>
</dbReference>
<dbReference type="InterPro" id="IPR018189">
    <property type="entry name" value="Phosphoglucose_isomerase_CS"/>
</dbReference>
<dbReference type="InterPro" id="IPR046348">
    <property type="entry name" value="SIS_dom_sf"/>
</dbReference>
<dbReference type="InterPro" id="IPR035476">
    <property type="entry name" value="SIS_PGI_1"/>
</dbReference>
<dbReference type="InterPro" id="IPR035482">
    <property type="entry name" value="SIS_PGI_2"/>
</dbReference>
<dbReference type="NCBIfam" id="NF001211">
    <property type="entry name" value="PRK00179.1"/>
    <property type="match status" value="1"/>
</dbReference>
<dbReference type="PANTHER" id="PTHR11469">
    <property type="entry name" value="GLUCOSE-6-PHOSPHATE ISOMERASE"/>
    <property type="match status" value="1"/>
</dbReference>
<dbReference type="PANTHER" id="PTHR11469:SF1">
    <property type="entry name" value="GLUCOSE-6-PHOSPHATE ISOMERASE"/>
    <property type="match status" value="1"/>
</dbReference>
<dbReference type="Pfam" id="PF00342">
    <property type="entry name" value="PGI"/>
    <property type="match status" value="1"/>
</dbReference>
<dbReference type="PRINTS" id="PR00662">
    <property type="entry name" value="G6PISOMERASE"/>
</dbReference>
<dbReference type="SUPFAM" id="SSF53697">
    <property type="entry name" value="SIS domain"/>
    <property type="match status" value="1"/>
</dbReference>
<dbReference type="PROSITE" id="PS00765">
    <property type="entry name" value="P_GLUCOSE_ISOMERASE_1"/>
    <property type="match status" value="1"/>
</dbReference>
<dbReference type="PROSITE" id="PS00174">
    <property type="entry name" value="P_GLUCOSE_ISOMERASE_2"/>
    <property type="match status" value="1"/>
</dbReference>
<dbReference type="PROSITE" id="PS51463">
    <property type="entry name" value="P_GLUCOSE_ISOMERASE_3"/>
    <property type="match status" value="1"/>
</dbReference>
<organism>
    <name type="scientific">Shigella flexneri</name>
    <dbReference type="NCBI Taxonomy" id="623"/>
    <lineage>
        <taxon>Bacteria</taxon>
        <taxon>Pseudomonadati</taxon>
        <taxon>Pseudomonadota</taxon>
        <taxon>Gammaproteobacteria</taxon>
        <taxon>Enterobacterales</taxon>
        <taxon>Enterobacteriaceae</taxon>
        <taxon>Shigella</taxon>
    </lineage>
</organism>
<feature type="chain" id="PRO_1000014022" description="Glucose-6-phosphate isomerase">
    <location>
        <begin position="1"/>
        <end position="549"/>
    </location>
</feature>
<feature type="active site" description="Proton donor" evidence="1">
    <location>
        <position position="355"/>
    </location>
</feature>
<feature type="active site" evidence="1">
    <location>
        <position position="386"/>
    </location>
</feature>
<feature type="active site" evidence="1">
    <location>
        <position position="514"/>
    </location>
</feature>
<feature type="modified residue" description="N6-acetyllysine" evidence="1">
    <location>
        <position position="80"/>
    </location>
</feature>
<feature type="modified residue" description="N6-acetyllysine" evidence="1">
    <location>
        <position position="228"/>
    </location>
</feature>
<feature type="modified residue" description="N6-acetyllysine" evidence="1">
    <location>
        <position position="234"/>
    </location>
</feature>